<comment type="function">
    <text>Important role in the capacity of milk to transport calcium phosphate.</text>
</comment>
<comment type="subcellular location">
    <subcellularLocation>
        <location>Secreted</location>
    </subcellularLocation>
</comment>
<comment type="tissue specificity">
    <text>Mammary gland specific. Secreted in milk.</text>
</comment>
<comment type="miscellaneous">
    <text>The sequence shown is variant form B.</text>
</comment>
<comment type="similarity">
    <text evidence="6">Belongs to the alpha-casein family.</text>
</comment>
<name>CASA1_CAPHI</name>
<feature type="signal peptide" evidence="3 4">
    <location>
        <begin position="1"/>
        <end position="15"/>
    </location>
</feature>
<feature type="chain" id="PRO_0000004448" description="Alpha-S1-casein">
    <location>
        <begin position="16"/>
        <end position="214"/>
    </location>
</feature>
<feature type="region of interest" description="Disordered" evidence="1">
    <location>
        <begin position="59"/>
        <end position="91"/>
    </location>
</feature>
<feature type="modified residue" description="Phosphoserine" evidence="4">
    <location>
        <position position="61"/>
    </location>
</feature>
<feature type="modified residue" description="Phosphoserine" evidence="4">
    <location>
        <position position="63"/>
    </location>
</feature>
<feature type="modified residue" description="Phosphoserine" evidence="4">
    <location>
        <position position="79"/>
    </location>
</feature>
<feature type="modified residue" description="Phosphoserine" evidence="4">
    <location>
        <position position="80"/>
    </location>
</feature>
<feature type="modified residue" description="Phosphoserine" evidence="4">
    <location>
        <position position="81"/>
    </location>
</feature>
<feature type="modified residue" description="Phosphoserine" evidence="4">
    <location>
        <position position="82"/>
    </location>
</feature>
<feature type="modified residue" description="Phosphoserine" evidence="4">
    <location>
        <position position="83"/>
    </location>
</feature>
<feature type="modified residue" description="Phosphoserine" evidence="3 4">
    <location>
        <position position="90"/>
    </location>
</feature>
<feature type="modified residue" description="Phosphoserine" evidence="4">
    <location>
        <position position="130"/>
    </location>
</feature>
<feature type="sequence variant" description="In variant C.">
    <original>H</original>
    <variation>I</variation>
    <location>
        <position position="23"/>
    </location>
</feature>
<feature type="sequence variant" description="In variant A." evidence="2">
    <original>P</original>
    <variation>L</variation>
    <location>
        <position position="31"/>
    </location>
</feature>
<feature type="sequence variant" description="In variant F." evidence="5">
    <location>
        <begin position="74"/>
        <end position="110"/>
    </location>
</feature>
<feature type="sequence variant" description="In variant D.">
    <location>
        <begin position="74"/>
        <end position="84"/>
    </location>
</feature>
<feature type="sequence variant" description="In variant A." evidence="2">
    <original>E</original>
    <variation>Q</variation>
    <location>
        <position position="92"/>
    </location>
</feature>
<feature type="sequence variant" description="In variants E and C." evidence="5">
    <original>R</original>
    <variation>K</variation>
    <location>
        <position position="115"/>
    </location>
</feature>
<feature type="sequence variant" description="In variant E.">
    <original>T</original>
    <variation>A</variation>
    <location>
        <position position="209"/>
    </location>
</feature>
<feature type="sequence variant" description="In variants E and C." evidence="5">
    <original>T</original>
    <variation>A</variation>
    <location>
        <position position="210"/>
    </location>
</feature>
<feature type="sequence conflict" description="In Ref. 1; CAA42496 and 2; CAA51022." evidence="6" ref="1 2">
    <original>R</original>
    <variation>Q</variation>
    <location>
        <position position="24"/>
    </location>
</feature>
<proteinExistence type="evidence at protein level"/>
<reference key="1">
    <citation type="journal article" date="1992" name="J. Biol. Chem.">
        <title>Mutations away from splice site recognition sequences might cis-modulate alternative splicing of goat alpha s1-casein transcripts. Structural organization of the relevant gene.</title>
        <authorList>
            <person name="Leroux C."/>
            <person name="Mazure N."/>
            <person name="Martin P."/>
        </authorList>
    </citation>
    <scope>NUCLEOTIDE SEQUENCE [MRNA]</scope>
    <scope>VARIANTS ALLELE A LEU-31 AND GLN-92</scope>
</reference>
<reference key="2">
    <citation type="journal article" date="1994" name="Gene">
        <title>Occurrence of a LINE sequence in the 3' UTR of the goat alpha s1-casein E-encoding allele associated with reduced protein synthesis level.</title>
        <authorList>
            <person name="Perez M.J."/>
            <person name="Leroux C."/>
            <person name="Bonastre A.S."/>
            <person name="Martin P."/>
        </authorList>
    </citation>
    <scope>NUCLEOTIDE SEQUENCE [MRNA]</scope>
    <scope>VARIANTS ALLELE E 74-GLN--LEU-110 DEL; LYS-115 AND ALA-210</scope>
    <source>
        <tissue>Mammary gland</tissue>
    </source>
</reference>
<reference key="3">
    <citation type="journal article" date="1990" name="Eur. J. Biochem.">
        <title>Two of the three genetic variants of goat alpha s1-casein which are synthesized at a reduced level have an internal deletion possibly due to altered RNA splicing.</title>
        <authorList>
            <person name="Brignon G."/>
            <person name="Mahe M.-F."/>
            <person name="Ribadeau-Dumas B."/>
            <person name="Mercier J.-C."/>
            <person name="Grosclaude F."/>
        </authorList>
    </citation>
    <scope>PROTEIN SEQUENCE OF 16-214 (VARIANTS D; E AND F)</scope>
    <scope>PHOSPHORYLATION AT SER-90</scope>
</reference>
<reference key="4">
    <citation type="journal article" date="1989" name="Protein Seq. Data Anal.">
        <title>Sequence of caprine alpha s1-casein and characterization of those of its genetic variants which are synthesized at a high level, alpha s1-CnA, B and C.</title>
        <authorList>
            <person name="Brignon G."/>
            <person name="Mahe M.-F."/>
            <person name="Grosclaude F."/>
            <person name="Ribadeau-Dumas B."/>
        </authorList>
    </citation>
    <scope>PROTEIN SEQUENCE OF 16-214 (VARIANTS A; B AND C)</scope>
    <scope>PHOSPHORYLATION AT SER-61; SER-63; SER-79; SER-80; SER-81; SER-82; SER-83; SER-90 AND SER-130</scope>
</reference>
<accession>P18626</accession>
<dbReference type="EMBL" id="X59836">
    <property type="protein sequence ID" value="CAA42496.1"/>
    <property type="molecule type" value="mRNA"/>
</dbReference>
<dbReference type="EMBL" id="X72221">
    <property type="protein sequence ID" value="CAA51022.1"/>
    <property type="molecule type" value="mRNA"/>
</dbReference>
<dbReference type="PIR" id="S34262">
    <property type="entry name" value="S34262"/>
</dbReference>
<dbReference type="RefSeq" id="XP_017904616.1">
    <property type="nucleotide sequence ID" value="XM_018049127.1"/>
</dbReference>
<dbReference type="Allergome" id="1242">
    <property type="allergen name" value="Cap h 8"/>
</dbReference>
<dbReference type="Allergome" id="2966">
    <property type="allergen name" value="Cap h 9"/>
</dbReference>
<dbReference type="iPTMnet" id="P18626"/>
<dbReference type="GeneID" id="100750242"/>
<dbReference type="CTD" id="1446"/>
<dbReference type="OrthoDB" id="9635074at2759"/>
<dbReference type="Proteomes" id="UP000291000">
    <property type="component" value="Unassembled WGS sequence"/>
</dbReference>
<dbReference type="Proteomes" id="UP000694566">
    <property type="component" value="Unplaced"/>
</dbReference>
<dbReference type="GO" id="GO:0005615">
    <property type="term" value="C:extracellular space"/>
    <property type="evidence" value="ECO:0007669"/>
    <property type="project" value="TreeGrafter"/>
</dbReference>
<dbReference type="GO" id="GO:1903496">
    <property type="term" value="P:response to 11-deoxycorticosterone"/>
    <property type="evidence" value="ECO:0007669"/>
    <property type="project" value="TreeGrafter"/>
</dbReference>
<dbReference type="GO" id="GO:1903494">
    <property type="term" value="P:response to dehydroepiandrosterone"/>
    <property type="evidence" value="ECO:0007669"/>
    <property type="project" value="TreeGrafter"/>
</dbReference>
<dbReference type="GO" id="GO:0032355">
    <property type="term" value="P:response to estradiol"/>
    <property type="evidence" value="ECO:0007669"/>
    <property type="project" value="TreeGrafter"/>
</dbReference>
<dbReference type="GO" id="GO:0032570">
    <property type="term" value="P:response to progesterone"/>
    <property type="evidence" value="ECO:0007669"/>
    <property type="project" value="TreeGrafter"/>
</dbReference>
<dbReference type="InterPro" id="IPR026999">
    <property type="entry name" value="Alpha-s1_casein"/>
</dbReference>
<dbReference type="InterPro" id="IPR001588">
    <property type="entry name" value="Casein"/>
</dbReference>
<dbReference type="InterPro" id="IPR031305">
    <property type="entry name" value="Casein_CS"/>
</dbReference>
<dbReference type="PANTHER" id="PTHR10240">
    <property type="entry name" value="ALPHA-S1-CASEIN"/>
    <property type="match status" value="1"/>
</dbReference>
<dbReference type="PANTHER" id="PTHR10240:SF0">
    <property type="entry name" value="ALPHA-S1-CASEIN"/>
    <property type="match status" value="1"/>
</dbReference>
<dbReference type="Pfam" id="PF00363">
    <property type="entry name" value="Casein"/>
    <property type="match status" value="1"/>
</dbReference>
<dbReference type="PROSITE" id="PS00306">
    <property type="entry name" value="CASEIN_ALPHA_BETA"/>
    <property type="match status" value="1"/>
</dbReference>
<keyword id="KW-0106">Calcium</keyword>
<keyword id="KW-0903">Direct protein sequencing</keyword>
<keyword id="KW-0494">Milk protein</keyword>
<keyword id="KW-0597">Phosphoprotein</keyword>
<keyword id="KW-1185">Reference proteome</keyword>
<keyword id="KW-0964">Secreted</keyword>
<keyword id="KW-0732">Signal</keyword>
<sequence length="214" mass="24290">MKLLILTCLVAVALARPKHPINHRGLSPEVPNENLLRFVVAPFPEVFRKENINELSKDIGSESTEDQAMEDAKQMKAGSSSSSEEIVPNSAEQKYIQKEDVPSERYLGYLEQLLRLKKYNVPQLEIVPKSAEEQLHSMKEGNPAHQKQPMIAVNQELAYFYPQLFRQFYQLDAYPSGAWYYLPLGTQYTDAPSFSDIPNPIGSENSGKTTMPLW</sequence>
<protein>
    <recommendedName>
        <fullName>Alpha-S1-casein</fullName>
        <shortName>Alpha-S1-CN</shortName>
    </recommendedName>
</protein>
<organism>
    <name type="scientific">Capra hircus</name>
    <name type="common">Goat</name>
    <dbReference type="NCBI Taxonomy" id="9925"/>
    <lineage>
        <taxon>Eukaryota</taxon>
        <taxon>Metazoa</taxon>
        <taxon>Chordata</taxon>
        <taxon>Craniata</taxon>
        <taxon>Vertebrata</taxon>
        <taxon>Euteleostomi</taxon>
        <taxon>Mammalia</taxon>
        <taxon>Eutheria</taxon>
        <taxon>Laurasiatheria</taxon>
        <taxon>Artiodactyla</taxon>
        <taxon>Ruminantia</taxon>
        <taxon>Pecora</taxon>
        <taxon>Bovidae</taxon>
        <taxon>Caprinae</taxon>
        <taxon>Capra</taxon>
    </lineage>
</organism>
<gene>
    <name type="primary">CSN1S1</name>
</gene>
<evidence type="ECO:0000256" key="1">
    <source>
        <dbReference type="SAM" id="MobiDB-lite"/>
    </source>
</evidence>
<evidence type="ECO:0000269" key="2">
    <source>
    </source>
</evidence>
<evidence type="ECO:0000269" key="3">
    <source>
    </source>
</evidence>
<evidence type="ECO:0000269" key="4">
    <source>
    </source>
</evidence>
<evidence type="ECO:0000269" key="5">
    <source>
    </source>
</evidence>
<evidence type="ECO:0000305" key="6"/>